<reference key="1">
    <citation type="submission" date="1994-07" db="EMBL/GenBank/DDBJ databases">
        <authorList>
            <person name="Schwartz D."/>
            <person name="Chaverri-Alamada L."/>
            <person name="Berliner J."/>
            <person name="Kirchgessner T."/>
            <person name="Quisomoro D."/>
            <person name="Fang J."/>
            <person name="Tekamp-Olson P."/>
            <person name="Lusis J."/>
            <person name="Fogelman A."/>
            <person name="Territo M."/>
        </authorList>
    </citation>
    <scope>NUCLEOTIDE SEQUENCE [MRNA]</scope>
</reference>
<feature type="signal peptide" evidence="2">
    <location>
        <begin position="1"/>
        <end position="31"/>
    </location>
</feature>
<feature type="chain" id="PRO_0000005056" description="Growth-regulated protein homolog">
    <location>
        <begin position="32"/>
        <end position="104"/>
    </location>
</feature>
<feature type="disulfide bond" evidence="1">
    <location>
        <begin position="40"/>
        <end position="66"/>
    </location>
</feature>
<feature type="disulfide bond" evidence="1">
    <location>
        <begin position="42"/>
        <end position="82"/>
    </location>
</feature>
<proteinExistence type="inferred from homology"/>
<organism>
    <name type="scientific">Oryctolagus cuniculus</name>
    <name type="common">Rabbit</name>
    <dbReference type="NCBI Taxonomy" id="9986"/>
    <lineage>
        <taxon>Eukaryota</taxon>
        <taxon>Metazoa</taxon>
        <taxon>Chordata</taxon>
        <taxon>Craniata</taxon>
        <taxon>Vertebrata</taxon>
        <taxon>Euteleostomi</taxon>
        <taxon>Mammalia</taxon>
        <taxon>Eutheria</taxon>
        <taxon>Euarchontoglires</taxon>
        <taxon>Glires</taxon>
        <taxon>Lagomorpha</taxon>
        <taxon>Leporidae</taxon>
        <taxon>Oryctolagus</taxon>
    </lineage>
</organism>
<evidence type="ECO:0000250" key="1"/>
<evidence type="ECO:0000305" key="2"/>
<keyword id="KW-0202">Cytokine</keyword>
<keyword id="KW-1015">Disulfide bond</keyword>
<keyword id="KW-0339">Growth factor</keyword>
<keyword id="KW-0395">Inflammatory response</keyword>
<keyword id="KW-1185">Reference proteome</keyword>
<keyword id="KW-0964">Secreted</keyword>
<keyword id="KW-0732">Signal</keyword>
<comment type="function">
    <text>Plays a role in monocyte adhesion to the endothelium.</text>
</comment>
<comment type="subcellular location">
    <subcellularLocation>
        <location>Secreted</location>
    </subcellularLocation>
</comment>
<comment type="similarity">
    <text evidence="2">Belongs to the intercrine alpha (chemokine CxC) family.</text>
</comment>
<protein>
    <recommendedName>
        <fullName>Growth-regulated protein homolog</fullName>
        <shortName>GRO homolog</shortName>
    </recommendedName>
</protein>
<name>GRO2_RABIT</name>
<accession>P47854</accession>
<dbReference type="EMBL" id="U12310">
    <property type="protein sequence ID" value="AAA20487.1"/>
    <property type="molecule type" value="mRNA"/>
</dbReference>
<dbReference type="RefSeq" id="NP_001075811.1">
    <property type="nucleotide sequence ID" value="NM_001082342.1"/>
</dbReference>
<dbReference type="SMR" id="P47854"/>
<dbReference type="GeneID" id="100009192"/>
<dbReference type="CTD" id="100009192"/>
<dbReference type="InParanoid" id="P47854"/>
<dbReference type="Proteomes" id="UP000001811">
    <property type="component" value="Unplaced"/>
</dbReference>
<dbReference type="GO" id="GO:0005615">
    <property type="term" value="C:extracellular space"/>
    <property type="evidence" value="ECO:0007669"/>
    <property type="project" value="UniProtKB-KW"/>
</dbReference>
<dbReference type="GO" id="GO:0008009">
    <property type="term" value="F:chemokine activity"/>
    <property type="evidence" value="ECO:0007669"/>
    <property type="project" value="InterPro"/>
</dbReference>
<dbReference type="GO" id="GO:0008083">
    <property type="term" value="F:growth factor activity"/>
    <property type="evidence" value="ECO:0007669"/>
    <property type="project" value="UniProtKB-KW"/>
</dbReference>
<dbReference type="GO" id="GO:0006955">
    <property type="term" value="P:immune response"/>
    <property type="evidence" value="ECO:0007669"/>
    <property type="project" value="InterPro"/>
</dbReference>
<dbReference type="GO" id="GO:0006954">
    <property type="term" value="P:inflammatory response"/>
    <property type="evidence" value="ECO:0007669"/>
    <property type="project" value="UniProtKB-KW"/>
</dbReference>
<dbReference type="CDD" id="cd00273">
    <property type="entry name" value="Chemokine_CXC"/>
    <property type="match status" value="1"/>
</dbReference>
<dbReference type="FunFam" id="2.40.50.40:FF:000004">
    <property type="entry name" value="C-X-C motif chemokine"/>
    <property type="match status" value="1"/>
</dbReference>
<dbReference type="Gene3D" id="2.40.50.40">
    <property type="match status" value="1"/>
</dbReference>
<dbReference type="InterPro" id="IPR039809">
    <property type="entry name" value="Chemokine_b/g/d"/>
</dbReference>
<dbReference type="InterPro" id="IPR001089">
    <property type="entry name" value="Chemokine_CXC"/>
</dbReference>
<dbReference type="InterPro" id="IPR018048">
    <property type="entry name" value="Chemokine_CXC_CS"/>
</dbReference>
<dbReference type="InterPro" id="IPR001811">
    <property type="entry name" value="Chemokine_IL8-like_dom"/>
</dbReference>
<dbReference type="InterPro" id="IPR033899">
    <property type="entry name" value="CXC_Chemokine_domain"/>
</dbReference>
<dbReference type="InterPro" id="IPR036048">
    <property type="entry name" value="Interleukin_8-like_sf"/>
</dbReference>
<dbReference type="PANTHER" id="PTHR12015:SF192">
    <property type="entry name" value="GROWTH-REGULATED ALPHA PROTEIN"/>
    <property type="match status" value="1"/>
</dbReference>
<dbReference type="PANTHER" id="PTHR12015">
    <property type="entry name" value="SMALL INDUCIBLE CYTOKINE A"/>
    <property type="match status" value="1"/>
</dbReference>
<dbReference type="Pfam" id="PF00048">
    <property type="entry name" value="IL8"/>
    <property type="match status" value="1"/>
</dbReference>
<dbReference type="PRINTS" id="PR00436">
    <property type="entry name" value="INTERLEUKIN8"/>
</dbReference>
<dbReference type="PRINTS" id="PR00437">
    <property type="entry name" value="SMALLCYTKCXC"/>
</dbReference>
<dbReference type="SMART" id="SM00199">
    <property type="entry name" value="SCY"/>
    <property type="match status" value="1"/>
</dbReference>
<dbReference type="SUPFAM" id="SSF54117">
    <property type="entry name" value="Interleukin 8-like chemokines"/>
    <property type="match status" value="1"/>
</dbReference>
<dbReference type="PROSITE" id="PS00471">
    <property type="entry name" value="SMALL_CYTOKINES_CXC"/>
    <property type="match status" value="1"/>
</dbReference>
<sequence length="104" mass="10900">MAPAATAAAPRLLRAALLLLLLVAAGRRAAGAPVVNELRCQCLQTLQGIHLKNIQSVKVTTPGPHCDQTEVIASLKTGQEVCLNPTAPVVKKIIDKMLNKASAN</sequence>